<proteinExistence type="inferred from homology"/>
<organism>
    <name type="scientific">Rickettsia conorii (strain ATCC VR-613 / Malish 7)</name>
    <dbReference type="NCBI Taxonomy" id="272944"/>
    <lineage>
        <taxon>Bacteria</taxon>
        <taxon>Pseudomonadati</taxon>
        <taxon>Pseudomonadota</taxon>
        <taxon>Alphaproteobacteria</taxon>
        <taxon>Rickettsiales</taxon>
        <taxon>Rickettsiaceae</taxon>
        <taxon>Rickettsieae</taxon>
        <taxon>Rickettsia</taxon>
        <taxon>spotted fever group</taxon>
    </lineage>
</organism>
<accession>Q92GF9</accession>
<protein>
    <recommendedName>
        <fullName>Aspartokinase</fullName>
        <ecNumber>2.7.2.4</ecNumber>
    </recommendedName>
    <alternativeName>
        <fullName>Aspartate kinase</fullName>
    </alternativeName>
</protein>
<evidence type="ECO:0000305" key="1"/>
<reference key="1">
    <citation type="journal article" date="2001" name="Science">
        <title>Mechanisms of evolution in Rickettsia conorii and R. prowazekii.</title>
        <authorList>
            <person name="Ogata H."/>
            <person name="Audic S."/>
            <person name="Renesto-Audiffren P."/>
            <person name="Fournier P.-E."/>
            <person name="Barbe V."/>
            <person name="Samson D."/>
            <person name="Roux V."/>
            <person name="Cossart P."/>
            <person name="Weissenbach J."/>
            <person name="Claverie J.-M."/>
            <person name="Raoult D."/>
        </authorList>
    </citation>
    <scope>NUCLEOTIDE SEQUENCE [LARGE SCALE GENOMIC DNA]</scope>
    <source>
        <strain>ATCC VR-613 / Malish 7</strain>
    </source>
</reference>
<comment type="catalytic activity">
    <reaction>
        <text>L-aspartate + ATP = 4-phospho-L-aspartate + ADP</text>
        <dbReference type="Rhea" id="RHEA:23776"/>
        <dbReference type="ChEBI" id="CHEBI:29991"/>
        <dbReference type="ChEBI" id="CHEBI:30616"/>
        <dbReference type="ChEBI" id="CHEBI:57535"/>
        <dbReference type="ChEBI" id="CHEBI:456216"/>
        <dbReference type="EC" id="2.7.2.4"/>
    </reaction>
</comment>
<comment type="pathway">
    <text>Amino-acid biosynthesis; L-lysine biosynthesis via DAP pathway; (S)-tetrahydrodipicolinate from L-aspartate: step 1/4.</text>
</comment>
<comment type="pathway">
    <text>Amino-acid biosynthesis; L-methionine biosynthesis via de novo pathway; L-homoserine from L-aspartate: step 1/3.</text>
</comment>
<comment type="pathway">
    <text>Amino-acid biosynthesis; L-threonine biosynthesis; L-threonine from L-aspartate: step 1/5.</text>
</comment>
<comment type="similarity">
    <text evidence="1">Belongs to the aspartokinase family.</text>
</comment>
<name>AK_RICCN</name>
<keyword id="KW-0028">Amino-acid biosynthesis</keyword>
<keyword id="KW-0067">ATP-binding</keyword>
<keyword id="KW-0220">Diaminopimelate biosynthesis</keyword>
<keyword id="KW-0418">Kinase</keyword>
<keyword id="KW-0457">Lysine biosynthesis</keyword>
<keyword id="KW-0547">Nucleotide-binding</keyword>
<keyword id="KW-0808">Transferase</keyword>
<gene>
    <name type="primary">lysC</name>
    <name type="ordered locus">RC1164</name>
</gene>
<sequence length="401" mass="44583">MALIIQKFGGTSVANIDRIKKIVPIIKTEIAKNNQVIVVVSAMAGVTNQLVTLCNELSSLNNISQFAEYDVALSSGEIVTASLLALALQEEDIKARSFLAWQLPMLTDNNHSKALVESITTDLLEKYLQLNTIPIIAGFQGINKSNRLTTLGRGGSDTTAALIAAAMKADRCDIYTDVEGIFTADPRIIPNAKKIKEIDFLEMLELASSGAQVLHPRAGELVMRYKIDMRVLSTFSPDTEGTLITSKDKNMENGIINSITSNKNLLKISVKSMSLSFLQVANMITQNNNHIEFMQEIKNNEEYSFITNLTDKNNLQALLTNLKDDKQIQYFTFDTEIATISLIGYGIKNDCKLLETILSKLTNDNINVHMIQLSEVKITLFINDQDTEKTIFNLYNLFKIS</sequence>
<feature type="chain" id="PRO_0000288719" description="Aspartokinase">
    <location>
        <begin position="1"/>
        <end position="401"/>
    </location>
</feature>
<dbReference type="EC" id="2.7.2.4"/>
<dbReference type="EMBL" id="AE006914">
    <property type="protein sequence ID" value="AAL03702.1"/>
    <property type="molecule type" value="Genomic_DNA"/>
</dbReference>
<dbReference type="PIR" id="D97845">
    <property type="entry name" value="D97845"/>
</dbReference>
<dbReference type="RefSeq" id="WP_010977733.1">
    <property type="nucleotide sequence ID" value="NC_003103.1"/>
</dbReference>
<dbReference type="SMR" id="Q92GF9"/>
<dbReference type="GeneID" id="928316"/>
<dbReference type="KEGG" id="rco:RC1164"/>
<dbReference type="PATRIC" id="fig|272944.4.peg.1338"/>
<dbReference type="HOGENOM" id="CLU_009116_3_2_5"/>
<dbReference type="UniPathway" id="UPA00034">
    <property type="reaction ID" value="UER00015"/>
</dbReference>
<dbReference type="UniPathway" id="UPA00050">
    <property type="reaction ID" value="UER00461"/>
</dbReference>
<dbReference type="UniPathway" id="UPA00051">
    <property type="reaction ID" value="UER00462"/>
</dbReference>
<dbReference type="Proteomes" id="UP000000816">
    <property type="component" value="Chromosome"/>
</dbReference>
<dbReference type="GO" id="GO:0005829">
    <property type="term" value="C:cytosol"/>
    <property type="evidence" value="ECO:0007669"/>
    <property type="project" value="TreeGrafter"/>
</dbReference>
<dbReference type="GO" id="GO:0004072">
    <property type="term" value="F:aspartate kinase activity"/>
    <property type="evidence" value="ECO:0007669"/>
    <property type="project" value="UniProtKB-EC"/>
</dbReference>
<dbReference type="GO" id="GO:0005524">
    <property type="term" value="F:ATP binding"/>
    <property type="evidence" value="ECO:0007669"/>
    <property type="project" value="UniProtKB-KW"/>
</dbReference>
<dbReference type="GO" id="GO:0019877">
    <property type="term" value="P:diaminopimelate biosynthetic process"/>
    <property type="evidence" value="ECO:0007669"/>
    <property type="project" value="UniProtKB-KW"/>
</dbReference>
<dbReference type="GO" id="GO:0009090">
    <property type="term" value="P:homoserine biosynthetic process"/>
    <property type="evidence" value="ECO:0007669"/>
    <property type="project" value="TreeGrafter"/>
</dbReference>
<dbReference type="GO" id="GO:0009089">
    <property type="term" value="P:lysine biosynthetic process via diaminopimelate"/>
    <property type="evidence" value="ECO:0007669"/>
    <property type="project" value="UniProtKB-UniPathway"/>
</dbReference>
<dbReference type="GO" id="GO:0009088">
    <property type="term" value="P:threonine biosynthetic process"/>
    <property type="evidence" value="ECO:0007669"/>
    <property type="project" value="UniProtKB-UniPathway"/>
</dbReference>
<dbReference type="CDD" id="cd04261">
    <property type="entry name" value="AAK_AKii-LysC-BS"/>
    <property type="match status" value="1"/>
</dbReference>
<dbReference type="FunFam" id="3.40.1160.10:FF:000002">
    <property type="entry name" value="Aspartokinase"/>
    <property type="match status" value="1"/>
</dbReference>
<dbReference type="Gene3D" id="3.40.1160.10">
    <property type="entry name" value="Acetylglutamate kinase-like"/>
    <property type="match status" value="1"/>
</dbReference>
<dbReference type="Gene3D" id="3.30.2130.10">
    <property type="entry name" value="VC0802-like"/>
    <property type="match status" value="1"/>
</dbReference>
<dbReference type="InterPro" id="IPR036393">
    <property type="entry name" value="AceGlu_kinase-like_sf"/>
</dbReference>
<dbReference type="InterPro" id="IPR045865">
    <property type="entry name" value="ACT-like_dom_sf"/>
</dbReference>
<dbReference type="InterPro" id="IPR054352">
    <property type="entry name" value="ACT_Aspartokinase"/>
</dbReference>
<dbReference type="InterPro" id="IPR041740">
    <property type="entry name" value="AKii-LysC-BS"/>
</dbReference>
<dbReference type="InterPro" id="IPR001048">
    <property type="entry name" value="Asp/Glu/Uridylate_kinase"/>
</dbReference>
<dbReference type="InterPro" id="IPR005260">
    <property type="entry name" value="Asp_kin_monofn"/>
</dbReference>
<dbReference type="InterPro" id="IPR001341">
    <property type="entry name" value="Asp_kinase"/>
</dbReference>
<dbReference type="InterPro" id="IPR018042">
    <property type="entry name" value="Aspartate_kinase_CS"/>
</dbReference>
<dbReference type="InterPro" id="IPR001057">
    <property type="entry name" value="Glu/AcGlu_kinase"/>
</dbReference>
<dbReference type="NCBIfam" id="TIGR00657">
    <property type="entry name" value="asp_kinases"/>
    <property type="match status" value="1"/>
</dbReference>
<dbReference type="NCBIfam" id="NF005154">
    <property type="entry name" value="PRK06635.1-2"/>
    <property type="match status" value="1"/>
</dbReference>
<dbReference type="NCBIfam" id="NF005155">
    <property type="entry name" value="PRK06635.1-4"/>
    <property type="match status" value="1"/>
</dbReference>
<dbReference type="NCBIfam" id="NF005158">
    <property type="entry name" value="PRK06635.2-2"/>
    <property type="match status" value="1"/>
</dbReference>
<dbReference type="PANTHER" id="PTHR21499">
    <property type="entry name" value="ASPARTATE KINASE"/>
    <property type="match status" value="1"/>
</dbReference>
<dbReference type="PANTHER" id="PTHR21499:SF3">
    <property type="entry name" value="ASPARTOKINASE"/>
    <property type="match status" value="1"/>
</dbReference>
<dbReference type="Pfam" id="PF00696">
    <property type="entry name" value="AA_kinase"/>
    <property type="match status" value="1"/>
</dbReference>
<dbReference type="Pfam" id="PF22468">
    <property type="entry name" value="ACT_9"/>
    <property type="match status" value="1"/>
</dbReference>
<dbReference type="PIRSF" id="PIRSF000726">
    <property type="entry name" value="Asp_kin"/>
    <property type="match status" value="1"/>
</dbReference>
<dbReference type="PRINTS" id="PR00474">
    <property type="entry name" value="GLU5KINASE"/>
</dbReference>
<dbReference type="SUPFAM" id="SSF55021">
    <property type="entry name" value="ACT-like"/>
    <property type="match status" value="1"/>
</dbReference>
<dbReference type="SUPFAM" id="SSF53633">
    <property type="entry name" value="Carbamate kinase-like"/>
    <property type="match status" value="1"/>
</dbReference>
<dbReference type="PROSITE" id="PS00324">
    <property type="entry name" value="ASPARTOKINASE"/>
    <property type="match status" value="1"/>
</dbReference>